<comment type="function">
    <text evidence="1">Binds to 23S rRNA. Forms part of two intersubunit bridges in the 70S ribosome.</text>
</comment>
<comment type="subunit">
    <text evidence="1">Part of the 50S ribosomal subunit. Forms a cluster with proteins L3 and L19. In the 70S ribosome, L14 and L19 interact and together make contacts with the 16S rRNA in bridges B5 and B8.</text>
</comment>
<comment type="similarity">
    <text evidence="1">Belongs to the universal ribosomal protein uL14 family.</text>
</comment>
<evidence type="ECO:0000255" key="1">
    <source>
        <dbReference type="HAMAP-Rule" id="MF_01367"/>
    </source>
</evidence>
<evidence type="ECO:0000305" key="2"/>
<proteinExistence type="inferred from homology"/>
<reference key="1">
    <citation type="journal article" date="1994" name="DNA Res.">
        <title>Cloning and characterization of the ribosomal protein genes in the spc operon of a prokaryotic endosymbiont of the pea aphid, Acyrthosiphon kondoi.</title>
        <authorList>
            <person name="Abe R."/>
            <person name="Yamashita A."/>
            <person name="Isono K."/>
        </authorList>
    </citation>
    <scope>NUCLEOTIDE SEQUENCE [GENOMIC DNA]</scope>
    <source>
        <strain>Kurashiki</strain>
    </source>
</reference>
<accession>P46176</accession>
<gene>
    <name evidence="1" type="primary">rplN</name>
</gene>
<protein>
    <recommendedName>
        <fullName evidence="1">Large ribosomal subunit protein uL14</fullName>
    </recommendedName>
    <alternativeName>
        <fullName evidence="2">50S ribosomal protein L14</fullName>
    </alternativeName>
</protein>
<dbReference type="EMBL" id="D31786">
    <property type="protein sequence ID" value="BAA06585.1"/>
    <property type="molecule type" value="Genomic_DNA"/>
</dbReference>
<dbReference type="SMR" id="P46176"/>
<dbReference type="GO" id="GO:0022625">
    <property type="term" value="C:cytosolic large ribosomal subunit"/>
    <property type="evidence" value="ECO:0007669"/>
    <property type="project" value="TreeGrafter"/>
</dbReference>
<dbReference type="GO" id="GO:0070180">
    <property type="term" value="F:large ribosomal subunit rRNA binding"/>
    <property type="evidence" value="ECO:0007669"/>
    <property type="project" value="TreeGrafter"/>
</dbReference>
<dbReference type="GO" id="GO:0003735">
    <property type="term" value="F:structural constituent of ribosome"/>
    <property type="evidence" value="ECO:0007669"/>
    <property type="project" value="InterPro"/>
</dbReference>
<dbReference type="GO" id="GO:0006412">
    <property type="term" value="P:translation"/>
    <property type="evidence" value="ECO:0007669"/>
    <property type="project" value="UniProtKB-UniRule"/>
</dbReference>
<dbReference type="CDD" id="cd00337">
    <property type="entry name" value="Ribosomal_uL14"/>
    <property type="match status" value="1"/>
</dbReference>
<dbReference type="FunFam" id="2.40.150.20:FF:000001">
    <property type="entry name" value="50S ribosomal protein L14"/>
    <property type="match status" value="1"/>
</dbReference>
<dbReference type="Gene3D" id="2.40.150.20">
    <property type="entry name" value="Ribosomal protein L14"/>
    <property type="match status" value="1"/>
</dbReference>
<dbReference type="HAMAP" id="MF_01367">
    <property type="entry name" value="Ribosomal_uL14"/>
    <property type="match status" value="1"/>
</dbReference>
<dbReference type="InterPro" id="IPR000218">
    <property type="entry name" value="Ribosomal_uL14"/>
</dbReference>
<dbReference type="InterPro" id="IPR005745">
    <property type="entry name" value="Ribosomal_uL14_bac-type"/>
</dbReference>
<dbReference type="InterPro" id="IPR019972">
    <property type="entry name" value="Ribosomal_uL14_CS"/>
</dbReference>
<dbReference type="InterPro" id="IPR036853">
    <property type="entry name" value="Ribosomal_uL14_sf"/>
</dbReference>
<dbReference type="NCBIfam" id="TIGR01067">
    <property type="entry name" value="rplN_bact"/>
    <property type="match status" value="1"/>
</dbReference>
<dbReference type="PANTHER" id="PTHR11761">
    <property type="entry name" value="50S/60S RIBOSOMAL PROTEIN L14/L23"/>
    <property type="match status" value="1"/>
</dbReference>
<dbReference type="PANTHER" id="PTHR11761:SF3">
    <property type="entry name" value="LARGE RIBOSOMAL SUBUNIT PROTEIN UL14M"/>
    <property type="match status" value="1"/>
</dbReference>
<dbReference type="Pfam" id="PF00238">
    <property type="entry name" value="Ribosomal_L14"/>
    <property type="match status" value="1"/>
</dbReference>
<dbReference type="SMART" id="SM01374">
    <property type="entry name" value="Ribosomal_L14"/>
    <property type="match status" value="1"/>
</dbReference>
<dbReference type="SUPFAM" id="SSF50193">
    <property type="entry name" value="Ribosomal protein L14"/>
    <property type="match status" value="1"/>
</dbReference>
<dbReference type="PROSITE" id="PS00049">
    <property type="entry name" value="RIBOSOMAL_L14"/>
    <property type="match status" value="1"/>
</dbReference>
<name>RL14_BUCAK</name>
<sequence>MIQEQTMLNVADNSGARRVMCIKVLGGSHRRYAGVGDIIKITIKEAIPRGKVKKGDVLKAVVVRTKKGVRRPDGSVIRFDGNACVILNNNSEQPVGTRIFGPVTRELRNERFMKIISLAPEVL</sequence>
<organism>
    <name type="scientific">Buchnera aphidicola subsp. Acyrthosiphon kondoi</name>
    <name type="common">Acyrthosiphon kondoi symbiotic bacterium</name>
    <dbReference type="NCBI Taxonomy" id="42474"/>
    <lineage>
        <taxon>Bacteria</taxon>
        <taxon>Pseudomonadati</taxon>
        <taxon>Pseudomonadota</taxon>
        <taxon>Gammaproteobacteria</taxon>
        <taxon>Enterobacterales</taxon>
        <taxon>Erwiniaceae</taxon>
        <taxon>Buchnera</taxon>
    </lineage>
</organism>
<keyword id="KW-0687">Ribonucleoprotein</keyword>
<keyword id="KW-0689">Ribosomal protein</keyword>
<keyword id="KW-0694">RNA-binding</keyword>
<keyword id="KW-0699">rRNA-binding</keyword>
<feature type="chain" id="PRO_0000128533" description="Large ribosomal subunit protein uL14">
    <location>
        <begin position="1"/>
        <end position="123"/>
    </location>
</feature>